<reference key="1">
    <citation type="submission" date="2006-02" db="EMBL/GenBank/DDBJ databases">
        <authorList>
            <consortium name="NIH - Mammalian Gene Collection (MGC) project"/>
        </authorList>
    </citation>
    <scope>NUCLEOTIDE SEQUENCE [LARGE SCALE MRNA]</scope>
    <source>
        <strain>Hereford</strain>
        <tissue>Uterus</tissue>
    </source>
</reference>
<organism>
    <name type="scientific">Bos taurus</name>
    <name type="common">Bovine</name>
    <dbReference type="NCBI Taxonomy" id="9913"/>
    <lineage>
        <taxon>Eukaryota</taxon>
        <taxon>Metazoa</taxon>
        <taxon>Chordata</taxon>
        <taxon>Craniata</taxon>
        <taxon>Vertebrata</taxon>
        <taxon>Euteleostomi</taxon>
        <taxon>Mammalia</taxon>
        <taxon>Eutheria</taxon>
        <taxon>Laurasiatheria</taxon>
        <taxon>Artiodactyla</taxon>
        <taxon>Ruminantia</taxon>
        <taxon>Pecora</taxon>
        <taxon>Bovidae</taxon>
        <taxon>Bovinae</taxon>
        <taxon>Bos</taxon>
    </lineage>
</organism>
<name>PHF11_BOVIN</name>
<feature type="chain" id="PRO_0000385014" description="PHD finger protein 11">
    <location>
        <begin position="1"/>
        <end position="337"/>
    </location>
</feature>
<feature type="zinc finger region" description="C2HC pre-PHD-type" evidence="2">
    <location>
        <begin position="42"/>
        <end position="78"/>
    </location>
</feature>
<feature type="zinc finger region" description="PHD-type" evidence="2">
    <location>
        <begin position="108"/>
        <end position="160"/>
    </location>
</feature>
<sequence length="337" mass="37951">MDTAGPSAPESTRGASWSEAQAARDIVPLPTGVFQVAERLQKRICALCPKDLECSVLYFAQSENIAAHENCLLYSSALVECEDYDPSNNDRNFDVESVKKEIKRGRKLKCTFCGKKGATVGCDLKSCFKNYHFFCAKNDHAVLQADGRTGIYKVFCQQHADPQNDLPSVKPLSGVFHSHYSEQTKPRHACFSGVKRKRGRSKRHHVQPPERMALKKEKDGRHTDAIVKAAFLKKCKEAGLLDALFEEILDKLHLIQERLMDETTAESDYEEIGTSLFDCRLFEDTLVNFQAAIENQIHQSEERRRQLKEEIELLQDLKQTLCSGLQSSSTSDSSLSS</sequence>
<gene>
    <name type="primary">PHF11</name>
</gene>
<keyword id="KW-0010">Activator</keyword>
<keyword id="KW-0479">Metal-binding</keyword>
<keyword id="KW-0539">Nucleus</keyword>
<keyword id="KW-1185">Reference proteome</keyword>
<keyword id="KW-0804">Transcription</keyword>
<keyword id="KW-0805">Transcription regulation</keyword>
<keyword id="KW-0862">Zinc</keyword>
<keyword id="KW-0863">Zinc-finger</keyword>
<protein>
    <recommendedName>
        <fullName>PHD finger protein 11</fullName>
    </recommendedName>
</protein>
<proteinExistence type="evidence at transcript level"/>
<comment type="function">
    <text evidence="1">Positive regulator of Th1-type cytokine gene expression.</text>
</comment>
<comment type="subunit">
    <text evidence="1">Interacts with BRCA1 and RELA.</text>
</comment>
<comment type="subcellular location">
    <subcellularLocation>
        <location evidence="1">Nucleus</location>
    </subcellularLocation>
</comment>
<accession>Q2HJ93</accession>
<evidence type="ECO:0000250" key="1"/>
<evidence type="ECO:0000255" key="2">
    <source>
        <dbReference type="PROSITE-ProRule" id="PRU01146"/>
    </source>
</evidence>
<dbReference type="EMBL" id="BC113245">
    <property type="protein sequence ID" value="AAI13246.1"/>
    <property type="molecule type" value="mRNA"/>
</dbReference>
<dbReference type="RefSeq" id="NP_001039609.1">
    <property type="nucleotide sequence ID" value="NM_001046144.1"/>
</dbReference>
<dbReference type="SMR" id="Q2HJ93"/>
<dbReference type="FunCoup" id="Q2HJ93">
    <property type="interactions" value="416"/>
</dbReference>
<dbReference type="STRING" id="9913.ENSBTAP00000056876"/>
<dbReference type="PaxDb" id="9913-ENSBTAP00000017493"/>
<dbReference type="GeneID" id="513331"/>
<dbReference type="KEGG" id="bta:513331"/>
<dbReference type="CTD" id="51131"/>
<dbReference type="VEuPathDB" id="HostDB:ENSBTAG00000013159"/>
<dbReference type="eggNOG" id="KOG1084">
    <property type="taxonomic scope" value="Eukaryota"/>
</dbReference>
<dbReference type="HOGENOM" id="CLU_076108_0_0_1"/>
<dbReference type="InParanoid" id="Q2HJ93"/>
<dbReference type="OMA" id="ECEDHDS"/>
<dbReference type="OrthoDB" id="2384350at2759"/>
<dbReference type="TreeFam" id="TF325426"/>
<dbReference type="Proteomes" id="UP000009136">
    <property type="component" value="Chromosome 12"/>
</dbReference>
<dbReference type="Bgee" id="ENSBTAG00000013159">
    <property type="expression patterns" value="Expressed in mesenteric lymph node and 107 other cell types or tissues"/>
</dbReference>
<dbReference type="GO" id="GO:0005634">
    <property type="term" value="C:nucleus"/>
    <property type="evidence" value="ECO:0000318"/>
    <property type="project" value="GO_Central"/>
</dbReference>
<dbReference type="GO" id="GO:0008270">
    <property type="term" value="F:zinc ion binding"/>
    <property type="evidence" value="ECO:0007669"/>
    <property type="project" value="UniProtKB-KW"/>
</dbReference>
<dbReference type="FunFam" id="3.30.40.10:FF:000425">
    <property type="entry name" value="PHD finger protein 11"/>
    <property type="match status" value="1"/>
</dbReference>
<dbReference type="Gene3D" id="3.30.40.10">
    <property type="entry name" value="Zinc/RING finger domain, C3HC4 (zinc finger)"/>
    <property type="match status" value="1"/>
</dbReference>
<dbReference type="InterPro" id="IPR034732">
    <property type="entry name" value="EPHD"/>
</dbReference>
<dbReference type="InterPro" id="IPR051188">
    <property type="entry name" value="PHD-type_Zinc_Finger"/>
</dbReference>
<dbReference type="InterPro" id="IPR001965">
    <property type="entry name" value="Znf_PHD"/>
</dbReference>
<dbReference type="InterPro" id="IPR013083">
    <property type="entry name" value="Znf_RING/FYVE/PHD"/>
</dbReference>
<dbReference type="PANTHER" id="PTHR12420">
    <property type="entry name" value="PHD FINGER PROTEIN"/>
    <property type="match status" value="1"/>
</dbReference>
<dbReference type="PANTHER" id="PTHR12420:SF4">
    <property type="entry name" value="PHD FINGER PROTEIN 11"/>
    <property type="match status" value="1"/>
</dbReference>
<dbReference type="Pfam" id="PF13771">
    <property type="entry name" value="zf-HC5HC2H"/>
    <property type="match status" value="1"/>
</dbReference>
<dbReference type="SMART" id="SM00249">
    <property type="entry name" value="PHD"/>
    <property type="match status" value="1"/>
</dbReference>
<dbReference type="PROSITE" id="PS51805">
    <property type="entry name" value="EPHD"/>
    <property type="match status" value="1"/>
</dbReference>